<keyword id="KW-0067">ATP-binding</keyword>
<keyword id="KW-0173">Coenzyme A biosynthesis</keyword>
<keyword id="KW-0963">Cytoplasm</keyword>
<keyword id="KW-0460">Magnesium</keyword>
<keyword id="KW-0547">Nucleotide-binding</keyword>
<keyword id="KW-0548">Nucleotidyltransferase</keyword>
<keyword id="KW-1185">Reference proteome</keyword>
<keyword id="KW-0808">Transferase</keyword>
<evidence type="ECO:0000255" key="1">
    <source>
        <dbReference type="HAMAP-Rule" id="MF_00151"/>
    </source>
</evidence>
<reference key="1">
    <citation type="journal article" date="2002" name="Proc. Natl. Acad. Sci. U.S.A.">
        <title>Extensive mosaic structure revealed by the complete genome sequence of uropathogenic Escherichia coli.</title>
        <authorList>
            <person name="Welch R.A."/>
            <person name="Burland V."/>
            <person name="Plunkett G. III"/>
            <person name="Redford P."/>
            <person name="Roesch P."/>
            <person name="Rasko D."/>
            <person name="Buckles E.L."/>
            <person name="Liou S.-R."/>
            <person name="Boutin A."/>
            <person name="Hackett J."/>
            <person name="Stroud D."/>
            <person name="Mayhew G.F."/>
            <person name="Rose D.J."/>
            <person name="Zhou S."/>
            <person name="Schwartz D.C."/>
            <person name="Perna N.T."/>
            <person name="Mobley H.L.T."/>
            <person name="Donnenberg M.S."/>
            <person name="Blattner F.R."/>
        </authorList>
    </citation>
    <scope>NUCLEOTIDE SEQUENCE [LARGE SCALE GENOMIC DNA]</scope>
    <source>
        <strain>CFT073 / ATCC 700928 / UPEC</strain>
    </source>
</reference>
<accession>Q8FC88</accession>
<organism>
    <name type="scientific">Escherichia coli O6:H1 (strain CFT073 / ATCC 700928 / UPEC)</name>
    <dbReference type="NCBI Taxonomy" id="199310"/>
    <lineage>
        <taxon>Bacteria</taxon>
        <taxon>Pseudomonadati</taxon>
        <taxon>Pseudomonadota</taxon>
        <taxon>Gammaproteobacteria</taxon>
        <taxon>Enterobacterales</taxon>
        <taxon>Enterobacteriaceae</taxon>
        <taxon>Escherichia</taxon>
    </lineage>
</organism>
<comment type="function">
    <text evidence="1">Reversibly transfers an adenylyl group from ATP to 4'-phosphopantetheine, yielding dephospho-CoA (dPCoA) and pyrophosphate.</text>
</comment>
<comment type="catalytic activity">
    <reaction evidence="1">
        <text>(R)-4'-phosphopantetheine + ATP + H(+) = 3'-dephospho-CoA + diphosphate</text>
        <dbReference type="Rhea" id="RHEA:19801"/>
        <dbReference type="ChEBI" id="CHEBI:15378"/>
        <dbReference type="ChEBI" id="CHEBI:30616"/>
        <dbReference type="ChEBI" id="CHEBI:33019"/>
        <dbReference type="ChEBI" id="CHEBI:57328"/>
        <dbReference type="ChEBI" id="CHEBI:61723"/>
        <dbReference type="EC" id="2.7.7.3"/>
    </reaction>
</comment>
<comment type="cofactor">
    <cofactor evidence="1">
        <name>Mg(2+)</name>
        <dbReference type="ChEBI" id="CHEBI:18420"/>
    </cofactor>
</comment>
<comment type="pathway">
    <text evidence="1">Cofactor biosynthesis; coenzyme A biosynthesis; CoA from (R)-pantothenate: step 4/5.</text>
</comment>
<comment type="subunit">
    <text evidence="1">Homohexamer.</text>
</comment>
<comment type="subcellular location">
    <subcellularLocation>
        <location evidence="1">Cytoplasm</location>
    </subcellularLocation>
</comment>
<comment type="similarity">
    <text evidence="1">Belongs to the bacterial CoaD family.</text>
</comment>
<sequence>MQKRAIYPGTFDPITNGHIDIVTRATQMFDHVILAIAASPSKKPMFTLEERVELAQQATAHLGNVEVVGFSDLMANFARNQHATVLIRGLRAVADFEYEMQLAHMNRHLMPELESVFLMPSKEWSFISSSLVKEVARHQGDVTHFLPENVHQALMAKLA</sequence>
<protein>
    <recommendedName>
        <fullName evidence="1">Phosphopantetheine adenylyltransferase</fullName>
        <ecNumber evidence="1">2.7.7.3</ecNumber>
    </recommendedName>
    <alternativeName>
        <fullName evidence="1">Dephospho-CoA pyrophosphorylase</fullName>
    </alternativeName>
    <alternativeName>
        <fullName evidence="1">Pantetheine-phosphate adenylyltransferase</fullName>
        <shortName evidence="1">PPAT</shortName>
    </alternativeName>
</protein>
<name>COAD_ECOL6</name>
<gene>
    <name evidence="1" type="primary">coaD</name>
    <name type="synonym">kdtB</name>
    <name type="ordered locus">c4458</name>
</gene>
<feature type="chain" id="PRO_0000156206" description="Phosphopantetheine adenylyltransferase">
    <location>
        <begin position="1"/>
        <end position="159"/>
    </location>
</feature>
<feature type="binding site" evidence="1">
    <location>
        <begin position="10"/>
        <end position="11"/>
    </location>
    <ligand>
        <name>ATP</name>
        <dbReference type="ChEBI" id="CHEBI:30616"/>
    </ligand>
</feature>
<feature type="binding site" evidence="1">
    <location>
        <position position="10"/>
    </location>
    <ligand>
        <name>substrate</name>
    </ligand>
</feature>
<feature type="binding site" evidence="1">
    <location>
        <position position="18"/>
    </location>
    <ligand>
        <name>ATP</name>
        <dbReference type="ChEBI" id="CHEBI:30616"/>
    </ligand>
</feature>
<feature type="binding site" evidence="1">
    <location>
        <position position="42"/>
    </location>
    <ligand>
        <name>substrate</name>
    </ligand>
</feature>
<feature type="binding site" evidence="1">
    <location>
        <position position="74"/>
    </location>
    <ligand>
        <name>substrate</name>
    </ligand>
</feature>
<feature type="binding site" evidence="1">
    <location>
        <position position="88"/>
    </location>
    <ligand>
        <name>substrate</name>
    </ligand>
</feature>
<feature type="binding site" evidence="1">
    <location>
        <begin position="89"/>
        <end position="91"/>
    </location>
    <ligand>
        <name>ATP</name>
        <dbReference type="ChEBI" id="CHEBI:30616"/>
    </ligand>
</feature>
<feature type="binding site" evidence="1">
    <location>
        <position position="99"/>
    </location>
    <ligand>
        <name>ATP</name>
        <dbReference type="ChEBI" id="CHEBI:30616"/>
    </ligand>
</feature>
<feature type="binding site" evidence="1">
    <location>
        <begin position="124"/>
        <end position="130"/>
    </location>
    <ligand>
        <name>ATP</name>
        <dbReference type="ChEBI" id="CHEBI:30616"/>
    </ligand>
</feature>
<feature type="site" description="Transition state stabilizer" evidence="1">
    <location>
        <position position="18"/>
    </location>
</feature>
<proteinExistence type="inferred from homology"/>
<dbReference type="EC" id="2.7.7.3" evidence="1"/>
<dbReference type="EMBL" id="AE014075">
    <property type="protein sequence ID" value="AAN82894.1"/>
    <property type="molecule type" value="Genomic_DNA"/>
</dbReference>
<dbReference type="RefSeq" id="WP_001171873.1">
    <property type="nucleotide sequence ID" value="NZ_CP051263.1"/>
</dbReference>
<dbReference type="SMR" id="Q8FC88"/>
<dbReference type="STRING" id="199310.c4458"/>
<dbReference type="GeneID" id="75173828"/>
<dbReference type="KEGG" id="ecc:c4458"/>
<dbReference type="eggNOG" id="COG0669">
    <property type="taxonomic scope" value="Bacteria"/>
</dbReference>
<dbReference type="HOGENOM" id="CLU_100149_0_1_6"/>
<dbReference type="BioCyc" id="ECOL199310:C4458-MONOMER"/>
<dbReference type="UniPathway" id="UPA00241">
    <property type="reaction ID" value="UER00355"/>
</dbReference>
<dbReference type="Proteomes" id="UP000001410">
    <property type="component" value="Chromosome"/>
</dbReference>
<dbReference type="GO" id="GO:0005737">
    <property type="term" value="C:cytoplasm"/>
    <property type="evidence" value="ECO:0007669"/>
    <property type="project" value="UniProtKB-SubCell"/>
</dbReference>
<dbReference type="GO" id="GO:0005524">
    <property type="term" value="F:ATP binding"/>
    <property type="evidence" value="ECO:0007669"/>
    <property type="project" value="UniProtKB-KW"/>
</dbReference>
<dbReference type="GO" id="GO:0004595">
    <property type="term" value="F:pantetheine-phosphate adenylyltransferase activity"/>
    <property type="evidence" value="ECO:0007669"/>
    <property type="project" value="UniProtKB-UniRule"/>
</dbReference>
<dbReference type="GO" id="GO:0015937">
    <property type="term" value="P:coenzyme A biosynthetic process"/>
    <property type="evidence" value="ECO:0007669"/>
    <property type="project" value="UniProtKB-UniRule"/>
</dbReference>
<dbReference type="CDD" id="cd02163">
    <property type="entry name" value="PPAT"/>
    <property type="match status" value="1"/>
</dbReference>
<dbReference type="FunFam" id="3.40.50.620:FF:000012">
    <property type="entry name" value="Phosphopantetheine adenylyltransferase"/>
    <property type="match status" value="1"/>
</dbReference>
<dbReference type="Gene3D" id="3.40.50.620">
    <property type="entry name" value="HUPs"/>
    <property type="match status" value="1"/>
</dbReference>
<dbReference type="HAMAP" id="MF_00151">
    <property type="entry name" value="PPAT_bact"/>
    <property type="match status" value="1"/>
</dbReference>
<dbReference type="InterPro" id="IPR004821">
    <property type="entry name" value="Cyt_trans-like"/>
</dbReference>
<dbReference type="InterPro" id="IPR001980">
    <property type="entry name" value="PPAT"/>
</dbReference>
<dbReference type="InterPro" id="IPR014729">
    <property type="entry name" value="Rossmann-like_a/b/a_fold"/>
</dbReference>
<dbReference type="NCBIfam" id="TIGR01510">
    <property type="entry name" value="coaD_prev_kdtB"/>
    <property type="match status" value="1"/>
</dbReference>
<dbReference type="NCBIfam" id="TIGR00125">
    <property type="entry name" value="cyt_tran_rel"/>
    <property type="match status" value="1"/>
</dbReference>
<dbReference type="PANTHER" id="PTHR21342">
    <property type="entry name" value="PHOSPHOPANTETHEINE ADENYLYLTRANSFERASE"/>
    <property type="match status" value="1"/>
</dbReference>
<dbReference type="PANTHER" id="PTHR21342:SF1">
    <property type="entry name" value="PHOSPHOPANTETHEINE ADENYLYLTRANSFERASE"/>
    <property type="match status" value="1"/>
</dbReference>
<dbReference type="Pfam" id="PF01467">
    <property type="entry name" value="CTP_transf_like"/>
    <property type="match status" value="1"/>
</dbReference>
<dbReference type="PRINTS" id="PR01020">
    <property type="entry name" value="LPSBIOSNTHSS"/>
</dbReference>
<dbReference type="SUPFAM" id="SSF52374">
    <property type="entry name" value="Nucleotidylyl transferase"/>
    <property type="match status" value="1"/>
</dbReference>